<reference key="1">
    <citation type="submission" date="2008-02" db="EMBL/GenBank/DDBJ databases">
        <title>Complete sequence of Haemophilus somnus 2336.</title>
        <authorList>
            <consortium name="US DOE Joint Genome Institute"/>
            <person name="Siddaramappa S."/>
            <person name="Duncan A.J."/>
            <person name="Challacombe J.F."/>
            <person name="Rainey D."/>
            <person name="Gillaspy A.F."/>
            <person name="Carson M."/>
            <person name="Gipson J."/>
            <person name="Gipson M."/>
            <person name="Bruce D."/>
            <person name="Detter J.C."/>
            <person name="Han C.S."/>
            <person name="Land M."/>
            <person name="Tapia R."/>
            <person name="Thompson L.S."/>
            <person name="Orvis J."/>
            <person name="Zaitshik J."/>
            <person name="Barnes G."/>
            <person name="Brettin T.S."/>
            <person name="Dyer D.W."/>
            <person name="Inzana T.J."/>
        </authorList>
    </citation>
    <scope>NUCLEOTIDE SEQUENCE [LARGE SCALE GENOMIC DNA]</scope>
    <source>
        <strain>2336</strain>
    </source>
</reference>
<protein>
    <recommendedName>
        <fullName evidence="1">tRNA pseudouridine synthase B</fullName>
        <ecNumber evidence="1">5.4.99.25</ecNumber>
    </recommendedName>
    <alternativeName>
        <fullName evidence="1">tRNA pseudouridine(55) synthase</fullName>
        <shortName evidence="1">Psi55 synthase</shortName>
    </alternativeName>
    <alternativeName>
        <fullName evidence="1">tRNA pseudouridylate synthase</fullName>
    </alternativeName>
    <alternativeName>
        <fullName evidence="1">tRNA-uridine isomerase</fullName>
    </alternativeName>
</protein>
<feature type="chain" id="PRO_1000084605" description="tRNA pseudouridine synthase B">
    <location>
        <begin position="1"/>
        <end position="308"/>
    </location>
</feature>
<feature type="active site" description="Nucleophile" evidence="1">
    <location>
        <position position="48"/>
    </location>
</feature>
<proteinExistence type="inferred from homology"/>
<gene>
    <name evidence="1" type="primary">truB</name>
    <name type="ordered locus">HSM_1292</name>
</gene>
<name>TRUB_HISS2</name>
<evidence type="ECO:0000255" key="1">
    <source>
        <dbReference type="HAMAP-Rule" id="MF_01080"/>
    </source>
</evidence>
<dbReference type="EC" id="5.4.99.25" evidence="1"/>
<dbReference type="EMBL" id="CP000947">
    <property type="protein sequence ID" value="ACA31023.1"/>
    <property type="molecule type" value="Genomic_DNA"/>
</dbReference>
<dbReference type="RefSeq" id="WP_011608976.1">
    <property type="nucleotide sequence ID" value="NC_010519.1"/>
</dbReference>
<dbReference type="SMR" id="B0UU15"/>
<dbReference type="STRING" id="228400.HSM_1292"/>
<dbReference type="GeneID" id="31487595"/>
<dbReference type="KEGG" id="hsm:HSM_1292"/>
<dbReference type="HOGENOM" id="CLU_032087_0_3_6"/>
<dbReference type="GO" id="GO:0003723">
    <property type="term" value="F:RNA binding"/>
    <property type="evidence" value="ECO:0007669"/>
    <property type="project" value="InterPro"/>
</dbReference>
<dbReference type="GO" id="GO:0160148">
    <property type="term" value="F:tRNA pseudouridine(55) synthase activity"/>
    <property type="evidence" value="ECO:0007669"/>
    <property type="project" value="UniProtKB-EC"/>
</dbReference>
<dbReference type="GO" id="GO:1990481">
    <property type="term" value="P:mRNA pseudouridine synthesis"/>
    <property type="evidence" value="ECO:0007669"/>
    <property type="project" value="TreeGrafter"/>
</dbReference>
<dbReference type="GO" id="GO:0031119">
    <property type="term" value="P:tRNA pseudouridine synthesis"/>
    <property type="evidence" value="ECO:0007669"/>
    <property type="project" value="UniProtKB-UniRule"/>
</dbReference>
<dbReference type="CDD" id="cd02573">
    <property type="entry name" value="PseudoU_synth_EcTruB"/>
    <property type="match status" value="1"/>
</dbReference>
<dbReference type="CDD" id="cd21152">
    <property type="entry name" value="PUA_TruB_bacterial"/>
    <property type="match status" value="1"/>
</dbReference>
<dbReference type="FunFam" id="3.30.2350.10:FF:000003">
    <property type="entry name" value="tRNA pseudouridine synthase B"/>
    <property type="match status" value="1"/>
</dbReference>
<dbReference type="Gene3D" id="3.30.2350.10">
    <property type="entry name" value="Pseudouridine synthase"/>
    <property type="match status" value="1"/>
</dbReference>
<dbReference type="Gene3D" id="2.30.130.10">
    <property type="entry name" value="PUA domain"/>
    <property type="match status" value="1"/>
</dbReference>
<dbReference type="HAMAP" id="MF_01080">
    <property type="entry name" value="TruB_bact"/>
    <property type="match status" value="1"/>
</dbReference>
<dbReference type="InterPro" id="IPR020103">
    <property type="entry name" value="PsdUridine_synth_cat_dom_sf"/>
</dbReference>
<dbReference type="InterPro" id="IPR002501">
    <property type="entry name" value="PsdUridine_synth_N"/>
</dbReference>
<dbReference type="InterPro" id="IPR015947">
    <property type="entry name" value="PUA-like_sf"/>
</dbReference>
<dbReference type="InterPro" id="IPR036974">
    <property type="entry name" value="PUA_sf"/>
</dbReference>
<dbReference type="InterPro" id="IPR014780">
    <property type="entry name" value="tRNA_psdUridine_synth_TruB"/>
</dbReference>
<dbReference type="InterPro" id="IPR015240">
    <property type="entry name" value="tRNA_sdUridine_synth_fam1_C"/>
</dbReference>
<dbReference type="InterPro" id="IPR032819">
    <property type="entry name" value="TruB_C"/>
</dbReference>
<dbReference type="NCBIfam" id="TIGR00431">
    <property type="entry name" value="TruB"/>
    <property type="match status" value="1"/>
</dbReference>
<dbReference type="PANTHER" id="PTHR13767:SF2">
    <property type="entry name" value="PSEUDOURIDYLATE SYNTHASE TRUB1"/>
    <property type="match status" value="1"/>
</dbReference>
<dbReference type="PANTHER" id="PTHR13767">
    <property type="entry name" value="TRNA-PSEUDOURIDINE SYNTHASE"/>
    <property type="match status" value="1"/>
</dbReference>
<dbReference type="Pfam" id="PF09157">
    <property type="entry name" value="TruB-C_2"/>
    <property type="match status" value="1"/>
</dbReference>
<dbReference type="Pfam" id="PF16198">
    <property type="entry name" value="TruB_C_2"/>
    <property type="match status" value="1"/>
</dbReference>
<dbReference type="Pfam" id="PF01509">
    <property type="entry name" value="TruB_N"/>
    <property type="match status" value="1"/>
</dbReference>
<dbReference type="SUPFAM" id="SSF55120">
    <property type="entry name" value="Pseudouridine synthase"/>
    <property type="match status" value="1"/>
</dbReference>
<dbReference type="SUPFAM" id="SSF88697">
    <property type="entry name" value="PUA domain-like"/>
    <property type="match status" value="1"/>
</dbReference>
<sequence length="308" mass="34721">MSKPRKKGRDINGIFLLDKSQGMSSNDIMQKVKRLFQANKAGHTGALDPLATGMLPICLGEATKFSQYLLDADKRYQVIAKLGERTDTSDADGQVVQKREVNIDLAKILTALEQFRGEIMQVPTMFSALKYQGKALYEYARAGITIEREARPISIFELKFIDYQIPYLTLEVHCSKGTYIRTLVDDLGEVLGCGAHVTRLRRIAVADYPYNKMMTLEQLQQFSEQEDLDLLDQHLLPMESAVIRLPGLHLTKEQARAVGFGQRIKFLNEQGIQGQVRLISPENLFLGVAVIDENSIVHPQRMVVIKPE</sequence>
<comment type="function">
    <text evidence="1">Responsible for synthesis of pseudouridine from uracil-55 in the psi GC loop of transfer RNAs.</text>
</comment>
<comment type="catalytic activity">
    <reaction evidence="1">
        <text>uridine(55) in tRNA = pseudouridine(55) in tRNA</text>
        <dbReference type="Rhea" id="RHEA:42532"/>
        <dbReference type="Rhea" id="RHEA-COMP:10101"/>
        <dbReference type="Rhea" id="RHEA-COMP:10102"/>
        <dbReference type="ChEBI" id="CHEBI:65314"/>
        <dbReference type="ChEBI" id="CHEBI:65315"/>
        <dbReference type="EC" id="5.4.99.25"/>
    </reaction>
</comment>
<comment type="similarity">
    <text evidence="1">Belongs to the pseudouridine synthase TruB family. Type 1 subfamily.</text>
</comment>
<keyword id="KW-0413">Isomerase</keyword>
<keyword id="KW-0819">tRNA processing</keyword>
<accession>B0UU15</accession>
<organism>
    <name type="scientific">Histophilus somni (strain 2336)</name>
    <name type="common">Haemophilus somnus</name>
    <dbReference type="NCBI Taxonomy" id="228400"/>
    <lineage>
        <taxon>Bacteria</taxon>
        <taxon>Pseudomonadati</taxon>
        <taxon>Pseudomonadota</taxon>
        <taxon>Gammaproteobacteria</taxon>
        <taxon>Pasteurellales</taxon>
        <taxon>Pasteurellaceae</taxon>
        <taxon>Histophilus</taxon>
    </lineage>
</organism>